<gene>
    <name type="primary">uppP</name>
    <name type="synonym">bacA</name>
    <name type="synonym">upk</name>
</gene>
<organism>
    <name type="scientific">Azospirillum brasilense</name>
    <dbReference type="NCBI Taxonomy" id="192"/>
    <lineage>
        <taxon>Bacteria</taxon>
        <taxon>Pseudomonadati</taxon>
        <taxon>Pseudomonadota</taxon>
        <taxon>Alphaproteobacteria</taxon>
        <taxon>Rhodospirillales</taxon>
        <taxon>Azospirillaceae</taxon>
        <taxon>Azospirillum</taxon>
    </lineage>
</organism>
<keyword id="KW-0046">Antibiotic resistance</keyword>
<keyword id="KW-0997">Cell inner membrane</keyword>
<keyword id="KW-1003">Cell membrane</keyword>
<keyword id="KW-0133">Cell shape</keyword>
<keyword id="KW-0961">Cell wall biogenesis/degradation</keyword>
<keyword id="KW-0378">Hydrolase</keyword>
<keyword id="KW-0472">Membrane</keyword>
<keyword id="KW-0573">Peptidoglycan synthesis</keyword>
<keyword id="KW-0812">Transmembrane</keyword>
<keyword id="KW-1133">Transmembrane helix</keyword>
<name>UPPP_AZOBR</name>
<evidence type="ECO:0000250" key="1"/>
<evidence type="ECO:0000255" key="2"/>
<evidence type="ECO:0000305" key="3"/>
<accession>P39438</accession>
<reference key="1">
    <citation type="journal article" date="1993" name="J. Biol. Chem.">
        <title>Glutamate synthase genes of the diazotroph Azospirillum brasilense. Cloning, sequencing, and analysis of functional domains.</title>
        <authorList>
            <person name="Pelanda R."/>
            <person name="Vanoni M.A."/>
            <person name="Perego M."/>
            <person name="Piubelli L."/>
            <person name="Galizzi A."/>
            <person name="Curti B."/>
            <person name="Zanetti G."/>
        </authorList>
    </citation>
    <scope>NUCLEOTIDE SEQUENCE [GENOMIC DNA]</scope>
    <source>
        <strain>ATCC 29145 / DSM 1690 / IMET 11303 / Sp7</strain>
    </source>
</reference>
<dbReference type="EC" id="3.6.1.27"/>
<dbReference type="EMBL" id="AF192408">
    <property type="protein sequence ID" value="AAA22178.2"/>
    <property type="molecule type" value="Genomic_DNA"/>
</dbReference>
<dbReference type="SMR" id="P39438"/>
<dbReference type="GO" id="GO:0005886">
    <property type="term" value="C:plasma membrane"/>
    <property type="evidence" value="ECO:0007669"/>
    <property type="project" value="UniProtKB-SubCell"/>
</dbReference>
<dbReference type="GO" id="GO:0050380">
    <property type="term" value="F:undecaprenyl-diphosphatase activity"/>
    <property type="evidence" value="ECO:0007669"/>
    <property type="project" value="UniProtKB-EC"/>
</dbReference>
<dbReference type="GO" id="GO:0071555">
    <property type="term" value="P:cell wall organization"/>
    <property type="evidence" value="ECO:0007669"/>
    <property type="project" value="UniProtKB-KW"/>
</dbReference>
<dbReference type="GO" id="GO:0009252">
    <property type="term" value="P:peptidoglycan biosynthetic process"/>
    <property type="evidence" value="ECO:0007669"/>
    <property type="project" value="UniProtKB-KW"/>
</dbReference>
<dbReference type="GO" id="GO:0008360">
    <property type="term" value="P:regulation of cell shape"/>
    <property type="evidence" value="ECO:0007669"/>
    <property type="project" value="UniProtKB-KW"/>
</dbReference>
<dbReference type="GO" id="GO:0046677">
    <property type="term" value="P:response to antibiotic"/>
    <property type="evidence" value="ECO:0007669"/>
    <property type="project" value="UniProtKB-KW"/>
</dbReference>
<dbReference type="InterPro" id="IPR003824">
    <property type="entry name" value="UppP"/>
</dbReference>
<dbReference type="NCBIfam" id="NF001389">
    <property type="entry name" value="PRK00281.1-2"/>
    <property type="match status" value="1"/>
</dbReference>
<dbReference type="PANTHER" id="PTHR30622">
    <property type="entry name" value="UNDECAPRENYL-DIPHOSPHATASE"/>
    <property type="match status" value="1"/>
</dbReference>
<dbReference type="PANTHER" id="PTHR30622:SF3">
    <property type="entry name" value="UNDECAPRENYL-DIPHOSPHATASE"/>
    <property type="match status" value="1"/>
</dbReference>
<dbReference type="Pfam" id="PF02673">
    <property type="entry name" value="BacA"/>
    <property type="match status" value="1"/>
</dbReference>
<protein>
    <recommendedName>
        <fullName>Undecaprenyl-diphosphatase</fullName>
        <ecNumber>3.6.1.27</ecNumber>
    </recommendedName>
    <alternativeName>
        <fullName>Bacitracin resistance protein</fullName>
    </alternativeName>
    <alternativeName>
        <fullName>Undecaprenyl pyrophosphate phosphatase</fullName>
    </alternativeName>
</protein>
<feature type="chain" id="PRO_0000151083" description="Undecaprenyl-diphosphatase">
    <location>
        <begin position="1"/>
        <end position="187" status="greater than"/>
    </location>
</feature>
<feature type="transmembrane region" description="Helical" evidence="2">
    <location>
        <begin position="13"/>
        <end position="33"/>
    </location>
</feature>
<feature type="transmembrane region" description="Helical" evidence="2">
    <location>
        <begin position="45"/>
        <end position="65"/>
    </location>
</feature>
<feature type="transmembrane region" description="Helical" evidence="2">
    <location>
        <begin position="85"/>
        <end position="105"/>
    </location>
</feature>
<feature type="transmembrane region" description="Helical" evidence="2">
    <location>
        <begin position="108"/>
        <end position="128"/>
    </location>
</feature>
<feature type="non-terminal residue">
    <location>
        <position position="187"/>
    </location>
</feature>
<sequence length="187" mass="19842">MLIDQYLDAALLGLIEGLTEFLPVSSTGHLIIFDTLLGFEGPPGKVFEVVIQLGAILAICTVYFARLWKVVTGLKDDPGARHFAMAVILAFLPAMVLGAALHGVIKAVLFNPTVVSIALILGGVAILMAERLVPAPRYHQIERFPAPLALKIGLCQCLALVPGVSRSGATILGSLLMGVDRRTAAEF</sequence>
<comment type="function">
    <text evidence="1">Catalyzes the dephosphorylation of undecaprenyl diphosphate (UPP). Confers resistance to bacitracin (By similarity).</text>
</comment>
<comment type="catalytic activity">
    <reaction>
        <text>di-trans,octa-cis-undecaprenyl diphosphate + H2O = di-trans,octa-cis-undecaprenyl phosphate + phosphate + H(+)</text>
        <dbReference type="Rhea" id="RHEA:28094"/>
        <dbReference type="ChEBI" id="CHEBI:15377"/>
        <dbReference type="ChEBI" id="CHEBI:15378"/>
        <dbReference type="ChEBI" id="CHEBI:43474"/>
        <dbReference type="ChEBI" id="CHEBI:58405"/>
        <dbReference type="ChEBI" id="CHEBI:60392"/>
        <dbReference type="EC" id="3.6.1.27"/>
    </reaction>
</comment>
<comment type="subcellular location">
    <subcellularLocation>
        <location evidence="1">Cell inner membrane</location>
        <topology evidence="1">Multi-pass membrane protein</topology>
    </subcellularLocation>
</comment>
<comment type="miscellaneous">
    <text>Bacitracin is thought to be involved in the inhibition of peptidoglycan synthesis by sequestering undecaprenyl diphosphate, thereby reducing the pool of lipid carrier available.</text>
</comment>
<comment type="similarity">
    <text evidence="3">Belongs to the UppP family.</text>
</comment>
<proteinExistence type="inferred from homology"/>